<dbReference type="EMBL" id="AE000782">
    <property type="protein sequence ID" value="AAB90009.1"/>
    <property type="molecule type" value="Genomic_DNA"/>
</dbReference>
<dbReference type="PIR" id="B69404">
    <property type="entry name" value="B69404"/>
</dbReference>
<dbReference type="SMR" id="O29033"/>
<dbReference type="STRING" id="224325.AF_1235"/>
<dbReference type="PaxDb" id="224325-AF_1235"/>
<dbReference type="DNASU" id="1484459"/>
<dbReference type="EnsemblBacteria" id="AAB90009">
    <property type="protein sequence ID" value="AAB90009"/>
    <property type="gene ID" value="AF_1235"/>
</dbReference>
<dbReference type="KEGG" id="afu:AF_1235"/>
<dbReference type="eggNOG" id="arCOG00579">
    <property type="taxonomic scope" value="Archaea"/>
</dbReference>
<dbReference type="HOGENOM" id="CLU_093932_3_2_2"/>
<dbReference type="OrthoDB" id="72957at2157"/>
<dbReference type="PhylomeDB" id="O29033"/>
<dbReference type="Proteomes" id="UP000002199">
    <property type="component" value="Chromosome"/>
</dbReference>
<dbReference type="GO" id="GO:0000428">
    <property type="term" value="C:DNA-directed RNA polymerase complex"/>
    <property type="evidence" value="ECO:0007669"/>
    <property type="project" value="UniProtKB-KW"/>
</dbReference>
<dbReference type="GO" id="GO:0003677">
    <property type="term" value="F:DNA binding"/>
    <property type="evidence" value="ECO:0007669"/>
    <property type="project" value="UniProtKB-KW"/>
</dbReference>
<dbReference type="GO" id="GO:0003899">
    <property type="term" value="F:DNA-directed RNA polymerase activity"/>
    <property type="evidence" value="ECO:0007669"/>
    <property type="project" value="InterPro"/>
</dbReference>
<dbReference type="GO" id="GO:0008270">
    <property type="term" value="F:zinc ion binding"/>
    <property type="evidence" value="ECO:0000250"/>
    <property type="project" value="UniProtKB"/>
</dbReference>
<dbReference type="GO" id="GO:0006351">
    <property type="term" value="P:DNA-templated transcription"/>
    <property type="evidence" value="ECO:0007669"/>
    <property type="project" value="InterPro"/>
</dbReference>
<dbReference type="GO" id="GO:0006355">
    <property type="term" value="P:regulation of DNA-templated transcription"/>
    <property type="evidence" value="ECO:0000250"/>
    <property type="project" value="UniProtKB"/>
</dbReference>
<dbReference type="CDD" id="cd10511">
    <property type="entry name" value="Zn-ribbon_TFS"/>
    <property type="match status" value="1"/>
</dbReference>
<dbReference type="Gene3D" id="2.20.25.10">
    <property type="match status" value="2"/>
</dbReference>
<dbReference type="InterPro" id="IPR019761">
    <property type="entry name" value="DNA-dir_RNA_pol-M_15_CS"/>
</dbReference>
<dbReference type="InterPro" id="IPR012164">
    <property type="entry name" value="Rpa12/Rpb9/Rpc10/TFS"/>
</dbReference>
<dbReference type="InterPro" id="IPR006288">
    <property type="entry name" value="TFS"/>
</dbReference>
<dbReference type="InterPro" id="IPR001529">
    <property type="entry name" value="Zn_ribbon_RPB9"/>
</dbReference>
<dbReference type="InterPro" id="IPR001222">
    <property type="entry name" value="Znf_TFIIS"/>
</dbReference>
<dbReference type="NCBIfam" id="TIGR01384">
    <property type="entry name" value="TFS_arch"/>
    <property type="match status" value="1"/>
</dbReference>
<dbReference type="PANTHER" id="PTHR11239">
    <property type="entry name" value="DNA-DIRECTED RNA POLYMERASE"/>
    <property type="match status" value="1"/>
</dbReference>
<dbReference type="PANTHER" id="PTHR11239:SF12">
    <property type="entry name" value="DNA-DIRECTED RNA POLYMERASE III SUBUNIT RPC10"/>
    <property type="match status" value="1"/>
</dbReference>
<dbReference type="Pfam" id="PF02150">
    <property type="entry name" value="Zn_ribbon_RPB9"/>
    <property type="match status" value="1"/>
</dbReference>
<dbReference type="Pfam" id="PF01096">
    <property type="entry name" value="Zn_ribbon_TFIIS"/>
    <property type="match status" value="1"/>
</dbReference>
<dbReference type="PIRSF" id="PIRSF005586">
    <property type="entry name" value="RNApol_RpoM"/>
    <property type="match status" value="1"/>
</dbReference>
<dbReference type="SMART" id="SM00661">
    <property type="entry name" value="RPOL9"/>
    <property type="match status" value="1"/>
</dbReference>
<dbReference type="SMART" id="SM00440">
    <property type="entry name" value="ZnF_C2C2"/>
    <property type="match status" value="1"/>
</dbReference>
<dbReference type="SUPFAM" id="SSF57783">
    <property type="entry name" value="Zinc beta-ribbon"/>
    <property type="match status" value="1"/>
</dbReference>
<dbReference type="PROSITE" id="PS01030">
    <property type="entry name" value="RNA_POL_M_15KD"/>
    <property type="match status" value="1"/>
</dbReference>
<dbReference type="PROSITE" id="PS00466">
    <property type="entry name" value="ZF_TFIIS_1"/>
    <property type="match status" value="1"/>
</dbReference>
<dbReference type="PROSITE" id="PS51133">
    <property type="entry name" value="ZF_TFIIS_2"/>
    <property type="match status" value="1"/>
</dbReference>
<keyword id="KW-0238">DNA-binding</keyword>
<keyword id="KW-0240">DNA-directed RNA polymerase</keyword>
<keyword id="KW-0479">Metal-binding</keyword>
<keyword id="KW-1185">Reference proteome</keyword>
<keyword id="KW-0804">Transcription</keyword>
<keyword id="KW-0805">Transcription regulation</keyword>
<keyword id="KW-0862">Zinc</keyword>
<keyword id="KW-0863">Zinc-finger</keyword>
<comment type="function">
    <text evidence="1">Induces RNA cleavage activity in the RNA polymerase. In its presence, the cleavage activity of the RNA polymerase truncates the RNA back to position +15 in a stepwise manner by releasing mainly dinucleotides from the 3'-end of the nascent RNA. The truncated RNAs are able to continue elongation. Involved in transcriptional proofreading and fidelity. Misincorporation of nucleotides during elongation of transcription leads to arrested elongation complexes which are rescued by TFS-promoted removal of a dinucleotide from the 3'-end. TFS is able to induce a cleavage resynthesis cycle in stalled elongation complexes (resulting from the next missing nucleotide or a reduced incorporation rate of a wrong nucleotide) preventing misincorporation and enabling proofreading in a post-incorporation manner. Pausing of elongation complexes is the main determinant of TFS-induced RNA cleavage.</text>
</comment>
<comment type="similarity">
    <text evidence="5">Belongs to the archaeal RpoM/eukaryotic RPA12/RPB9/RPC11 RNA polymerase family.</text>
</comment>
<comment type="caution">
    <text evidence="5">More similar by sequence similarity to the eukaryotic RNA polymerase subunits.</text>
</comment>
<proteinExistence type="inferred from homology"/>
<organism>
    <name type="scientific">Archaeoglobus fulgidus (strain ATCC 49558 / DSM 4304 / JCM 9628 / NBRC 100126 / VC-16)</name>
    <dbReference type="NCBI Taxonomy" id="224325"/>
    <lineage>
        <taxon>Archaea</taxon>
        <taxon>Methanobacteriati</taxon>
        <taxon>Methanobacteriota</taxon>
        <taxon>Archaeoglobi</taxon>
        <taxon>Archaeoglobales</taxon>
        <taxon>Archaeoglobaceae</taxon>
        <taxon>Archaeoglobus</taxon>
    </lineage>
</organism>
<gene>
    <name evidence="1" type="primary">tfs</name>
    <name type="ordered locus">AF_1235</name>
</gene>
<protein>
    <recommendedName>
        <fullName evidence="1">Transcription factor S</fullName>
    </recommendedName>
    <alternativeName>
        <fullName evidence="1">Transcription elongation factor IIS/RNA polymerase subunit homolog</fullName>
        <shortName evidence="1">TFIIS/RPSU homolog</shortName>
    </alternativeName>
</protein>
<sequence length="103" mass="12057">MEFCPKCKSLMIYQGDKLVCRKCGYEKEADDSEELVIKVERNKEDVPVIEGENLKTLPTTKAICPACGHNEAFWWLRQLRAADESEVRFFRCTKCGKTWREYD</sequence>
<accession>O29033</accession>
<reference key="1">
    <citation type="journal article" date="1997" name="Nature">
        <title>The complete genome sequence of the hyperthermophilic, sulphate-reducing archaeon Archaeoglobus fulgidus.</title>
        <authorList>
            <person name="Klenk H.-P."/>
            <person name="Clayton R.A."/>
            <person name="Tomb J.-F."/>
            <person name="White O."/>
            <person name="Nelson K.E."/>
            <person name="Ketchum K.A."/>
            <person name="Dodson R.J."/>
            <person name="Gwinn M.L."/>
            <person name="Hickey E.K."/>
            <person name="Peterson J.D."/>
            <person name="Richardson D.L."/>
            <person name="Kerlavage A.R."/>
            <person name="Graham D.E."/>
            <person name="Kyrpides N.C."/>
            <person name="Fleischmann R.D."/>
            <person name="Quackenbush J."/>
            <person name="Lee N.H."/>
            <person name="Sutton G.G."/>
            <person name="Gill S.R."/>
            <person name="Kirkness E.F."/>
            <person name="Dougherty B.A."/>
            <person name="McKenney K."/>
            <person name="Adams M.D."/>
            <person name="Loftus B.J."/>
            <person name="Peterson S.N."/>
            <person name="Reich C.I."/>
            <person name="McNeil L.K."/>
            <person name="Badger J.H."/>
            <person name="Glodek A."/>
            <person name="Zhou L."/>
            <person name="Overbeek R."/>
            <person name="Gocayne J.D."/>
            <person name="Weidman J.F."/>
            <person name="McDonald L.A."/>
            <person name="Utterback T.R."/>
            <person name="Cotton M.D."/>
            <person name="Spriggs T."/>
            <person name="Artiach P."/>
            <person name="Kaine B.P."/>
            <person name="Sykes S.M."/>
            <person name="Sadow P.W."/>
            <person name="D'Andrea K.P."/>
            <person name="Bowman C."/>
            <person name="Fujii C."/>
            <person name="Garland S.A."/>
            <person name="Mason T.M."/>
            <person name="Olsen G.J."/>
            <person name="Fraser C.M."/>
            <person name="Smith H.O."/>
            <person name="Woese C.R."/>
            <person name="Venter J.C."/>
        </authorList>
    </citation>
    <scope>NUCLEOTIDE SEQUENCE [LARGE SCALE GENOMIC DNA]</scope>
    <source>
        <strain>ATCC 49558 / DSM 4304 / JCM 9628 / NBRC 100126 / VC-16</strain>
    </source>
</reference>
<feature type="chain" id="PRO_0000121480" description="Transcription factor S">
    <location>
        <begin position="1"/>
        <end position="103"/>
    </location>
</feature>
<feature type="zinc finger region" description="C4-type" evidence="2">
    <location>
        <begin position="4"/>
        <end position="23"/>
    </location>
</feature>
<feature type="zinc finger region" description="TFIIS-type" evidence="3">
    <location>
        <begin position="60"/>
        <end position="100"/>
    </location>
</feature>
<feature type="binding site" evidence="4">
    <location>
        <position position="4"/>
    </location>
    <ligand>
        <name>Zn(2+)</name>
        <dbReference type="ChEBI" id="CHEBI:29105"/>
        <label>1</label>
    </ligand>
</feature>
<feature type="binding site" evidence="4">
    <location>
        <position position="7"/>
    </location>
    <ligand>
        <name>Zn(2+)</name>
        <dbReference type="ChEBI" id="CHEBI:29105"/>
        <label>1</label>
    </ligand>
</feature>
<feature type="binding site" evidence="4">
    <location>
        <position position="20"/>
    </location>
    <ligand>
        <name>Zn(2+)</name>
        <dbReference type="ChEBI" id="CHEBI:29105"/>
        <label>1</label>
    </ligand>
</feature>
<feature type="binding site" evidence="4">
    <location>
        <position position="23"/>
    </location>
    <ligand>
        <name>Zn(2+)</name>
        <dbReference type="ChEBI" id="CHEBI:29105"/>
        <label>1</label>
    </ligand>
</feature>
<feature type="binding site" evidence="3">
    <location>
        <position position="64"/>
    </location>
    <ligand>
        <name>Zn(2+)</name>
        <dbReference type="ChEBI" id="CHEBI:29105"/>
        <label>2</label>
    </ligand>
</feature>
<feature type="binding site" evidence="3">
    <location>
        <position position="67"/>
    </location>
    <ligand>
        <name>Zn(2+)</name>
        <dbReference type="ChEBI" id="CHEBI:29105"/>
        <label>2</label>
    </ligand>
</feature>
<feature type="binding site" evidence="3">
    <location>
        <position position="92"/>
    </location>
    <ligand>
        <name>Zn(2+)</name>
        <dbReference type="ChEBI" id="CHEBI:29105"/>
        <label>2</label>
    </ligand>
</feature>
<feature type="binding site" evidence="3">
    <location>
        <position position="95"/>
    </location>
    <ligand>
        <name>Zn(2+)</name>
        <dbReference type="ChEBI" id="CHEBI:29105"/>
        <label>2</label>
    </ligand>
</feature>
<evidence type="ECO:0000250" key="1">
    <source>
        <dbReference type="UniProtKB" id="Q9P9I8"/>
    </source>
</evidence>
<evidence type="ECO:0000255" key="2"/>
<evidence type="ECO:0000255" key="3">
    <source>
        <dbReference type="PROSITE-ProRule" id="PRU00472"/>
    </source>
</evidence>
<evidence type="ECO:0000255" key="4">
    <source>
        <dbReference type="PROSITE-ProRule" id="PRU10145"/>
    </source>
</evidence>
<evidence type="ECO:0000305" key="5"/>
<name>TFS_ARCFU</name>